<organism>
    <name type="scientific">Conus textile</name>
    <name type="common">Cloth-of-gold cone</name>
    <dbReference type="NCBI Taxonomy" id="6494"/>
    <lineage>
        <taxon>Eukaryota</taxon>
        <taxon>Metazoa</taxon>
        <taxon>Spiralia</taxon>
        <taxon>Lophotrochozoa</taxon>
        <taxon>Mollusca</taxon>
        <taxon>Gastropoda</taxon>
        <taxon>Caenogastropoda</taxon>
        <taxon>Neogastropoda</taxon>
        <taxon>Conoidea</taxon>
        <taxon>Conidae</taxon>
        <taxon>Conus</taxon>
        <taxon>Cylinder</taxon>
    </lineage>
</organism>
<evidence type="ECO:0000250" key="1"/>
<evidence type="ECO:0000255" key="2"/>
<evidence type="ECO:0000305" key="3"/>
<keyword id="KW-0108">Calcium channel impairing toxin</keyword>
<keyword id="KW-0165">Cleavage on pair of basic residues</keyword>
<keyword id="KW-1015">Disulfide bond</keyword>
<keyword id="KW-0872">Ion channel impairing toxin</keyword>
<keyword id="KW-0960">Knottin</keyword>
<keyword id="KW-0528">Neurotoxin</keyword>
<keyword id="KW-0638">Presynaptic neurotoxin</keyword>
<keyword id="KW-0964">Secreted</keyword>
<keyword id="KW-0732">Signal</keyword>
<keyword id="KW-0800">Toxin</keyword>
<keyword id="KW-1218">Voltage-gated calcium channel impairing toxin</keyword>
<name>O16K_CONTE</name>
<comment type="function">
    <text evidence="1">Omega-conotoxins act at presynaptic membranes, they bind and block voltage-gated calcium channels (Cav).</text>
</comment>
<comment type="subcellular location">
    <subcellularLocation>
        <location evidence="1">Secreted</location>
    </subcellularLocation>
</comment>
<comment type="tissue specificity">
    <text>Expressed by the venom duct.</text>
</comment>
<comment type="domain">
    <text evidence="1">The presence of a 'disulfide through disulfide knot' structurally defines this protein as a knottin.</text>
</comment>
<comment type="domain">
    <text>The cysteine framework is VI/VII (C-C-CC-C-C).</text>
</comment>
<comment type="similarity">
    <text evidence="3">Belongs to the conotoxin O1 superfamily.</text>
</comment>
<sequence>MKLTCMMIVAVLFLTAWTFVTAITSNGLENLFPKAHHEMKNPEASKLNKRCVPYEGPCNWLTQNCCDATCVVFWCL</sequence>
<feature type="signal peptide" evidence="2">
    <location>
        <begin position="1"/>
        <end position="22"/>
    </location>
</feature>
<feature type="propeptide" id="PRO_0000404708" evidence="1">
    <location>
        <begin position="23"/>
        <end position="48"/>
    </location>
</feature>
<feature type="peptide" id="PRO_0000404709" description="Omega-conotoxin-like TxO5">
    <location>
        <begin position="51"/>
        <end position="76"/>
    </location>
</feature>
<feature type="disulfide bond" evidence="1">
    <location>
        <begin position="51"/>
        <end position="66"/>
    </location>
</feature>
<feature type="disulfide bond" evidence="1">
    <location>
        <begin position="58"/>
        <end position="70"/>
    </location>
</feature>
<feature type="disulfide bond" evidence="1">
    <location>
        <begin position="65"/>
        <end position="75"/>
    </location>
</feature>
<dbReference type="EMBL" id="AF193262">
    <property type="protein sequence ID" value="AAF07973.1"/>
    <property type="molecule type" value="mRNA"/>
</dbReference>
<dbReference type="SMR" id="Q9U654"/>
<dbReference type="ConoServer" id="1095">
    <property type="toxin name" value="TxO5 precursor"/>
</dbReference>
<dbReference type="GO" id="GO:0005576">
    <property type="term" value="C:extracellular region"/>
    <property type="evidence" value="ECO:0007669"/>
    <property type="project" value="UniProtKB-SubCell"/>
</dbReference>
<dbReference type="GO" id="GO:0044231">
    <property type="term" value="C:host cell presynaptic membrane"/>
    <property type="evidence" value="ECO:0007669"/>
    <property type="project" value="UniProtKB-KW"/>
</dbReference>
<dbReference type="GO" id="GO:0005246">
    <property type="term" value="F:calcium channel regulator activity"/>
    <property type="evidence" value="ECO:0007669"/>
    <property type="project" value="UniProtKB-KW"/>
</dbReference>
<dbReference type="GO" id="GO:0008200">
    <property type="term" value="F:ion channel inhibitor activity"/>
    <property type="evidence" value="ECO:0007669"/>
    <property type="project" value="InterPro"/>
</dbReference>
<dbReference type="GO" id="GO:0090729">
    <property type="term" value="F:toxin activity"/>
    <property type="evidence" value="ECO:0007669"/>
    <property type="project" value="UniProtKB-KW"/>
</dbReference>
<dbReference type="InterPro" id="IPR004214">
    <property type="entry name" value="Conotoxin"/>
</dbReference>
<dbReference type="InterPro" id="IPR012321">
    <property type="entry name" value="Conotoxin_omega-typ_CS"/>
</dbReference>
<dbReference type="Pfam" id="PF02950">
    <property type="entry name" value="Conotoxin"/>
    <property type="match status" value="1"/>
</dbReference>
<dbReference type="PROSITE" id="PS60004">
    <property type="entry name" value="OMEGA_CONOTOXIN"/>
    <property type="match status" value="1"/>
</dbReference>
<proteinExistence type="evidence at transcript level"/>
<protein>
    <recommendedName>
        <fullName>Omega-conotoxin-like TxO5</fullName>
    </recommendedName>
    <alternativeName>
        <fullName>Conotoxin TxMKLT1-012</fullName>
    </alternativeName>
</protein>
<reference key="1">
    <citation type="journal article" date="2001" name="Mol. Biol. Evol.">
        <title>Mechanisms for evolving hypervariability: the case of conopeptides.</title>
        <authorList>
            <person name="Conticello S.G."/>
            <person name="Gilad Y."/>
            <person name="Avidan N."/>
            <person name="Ben-Asher E."/>
            <person name="Levy Z."/>
            <person name="Fainzilber M."/>
        </authorList>
    </citation>
    <scope>NUCLEOTIDE SEQUENCE [MRNA]</scope>
    <source>
        <tissue>Venom duct</tissue>
    </source>
</reference>
<accession>Q9U654</accession>